<name>SYR_SHESR</name>
<proteinExistence type="inferred from homology"/>
<gene>
    <name evidence="1" type="primary">argS</name>
    <name type="ordered locus">Shewmr7_0456</name>
</gene>
<accession>Q0HZJ6</accession>
<feature type="chain" id="PRO_1000018120" description="Arginine--tRNA ligase">
    <location>
        <begin position="1"/>
        <end position="581"/>
    </location>
</feature>
<feature type="short sequence motif" description="'HIGH' region">
    <location>
        <begin position="126"/>
        <end position="136"/>
    </location>
</feature>
<organism>
    <name type="scientific">Shewanella sp. (strain MR-7)</name>
    <dbReference type="NCBI Taxonomy" id="60481"/>
    <lineage>
        <taxon>Bacteria</taxon>
        <taxon>Pseudomonadati</taxon>
        <taxon>Pseudomonadota</taxon>
        <taxon>Gammaproteobacteria</taxon>
        <taxon>Alteromonadales</taxon>
        <taxon>Shewanellaceae</taxon>
        <taxon>Shewanella</taxon>
    </lineage>
</organism>
<keyword id="KW-0030">Aminoacyl-tRNA synthetase</keyword>
<keyword id="KW-0067">ATP-binding</keyword>
<keyword id="KW-0963">Cytoplasm</keyword>
<keyword id="KW-0436">Ligase</keyword>
<keyword id="KW-0547">Nucleotide-binding</keyword>
<keyword id="KW-0648">Protein biosynthesis</keyword>
<reference key="1">
    <citation type="submission" date="2006-08" db="EMBL/GenBank/DDBJ databases">
        <title>Complete sequence of chromosome 1 of Shewanella sp. MR-7.</title>
        <authorList>
            <person name="Copeland A."/>
            <person name="Lucas S."/>
            <person name="Lapidus A."/>
            <person name="Barry K."/>
            <person name="Detter J.C."/>
            <person name="Glavina del Rio T."/>
            <person name="Hammon N."/>
            <person name="Israni S."/>
            <person name="Dalin E."/>
            <person name="Tice H."/>
            <person name="Pitluck S."/>
            <person name="Kiss H."/>
            <person name="Brettin T."/>
            <person name="Bruce D."/>
            <person name="Han C."/>
            <person name="Tapia R."/>
            <person name="Gilna P."/>
            <person name="Schmutz J."/>
            <person name="Larimer F."/>
            <person name="Land M."/>
            <person name="Hauser L."/>
            <person name="Kyrpides N."/>
            <person name="Mikhailova N."/>
            <person name="Nealson K."/>
            <person name="Konstantinidis K."/>
            <person name="Klappenbach J."/>
            <person name="Tiedje J."/>
            <person name="Richardson P."/>
        </authorList>
    </citation>
    <scope>NUCLEOTIDE SEQUENCE [LARGE SCALE GENOMIC DNA]</scope>
    <source>
        <strain>MR-7</strain>
    </source>
</reference>
<sequence>MKSHIQSLLEQTIESFKQQGILPADFEARIQVDRTKDKSHGDLATNLAMMLTKAAGKNPRELAQLIIDNLPASAYVAKVEIAGPGFINFFIDDSALANQLQAAISDEHLGIKLPTPQTIVVDYSSPNLAKEMHVGHLRSTIIGDSVVRTLEFLGHKVIRQNHVGDWGTQFGMLLAYMEELRAQNGEQAQLELSDLETFYRAAKLRFDESAEFATRARQLVVELQSGDEYCNKLWREFNDISLSHCHEVYERLGVSLTRADVHGESAYNADLEQVVKDLDAQGLLTQSNGAKVVFQEEFRNKEGEALPVIIQKADGGYLYATTDLAAMRYRSSVLKADRVLYFVDLRQALHFQQVFSLAKLAKFVRNDMSLEHLGFGTMNGEDGRPFKTRTGGVVKLVDLLDEANTRALELVRSKNPDMDEATLAEIARVVGISAVKYADLSKNRTSDYIFSFEQMLSFEGNTAPYLLYAYTRVAGIFKRATDIDLSQAKIVLEHEKEKDLGNKLAQFGEILSRVVDKGQPHVLCGYLYELAGAFSSFYEACPVLAADNDEQKHSRLLLSQLTANTLQKGLNLLGIETLERM</sequence>
<comment type="catalytic activity">
    <reaction evidence="1">
        <text>tRNA(Arg) + L-arginine + ATP = L-arginyl-tRNA(Arg) + AMP + diphosphate</text>
        <dbReference type="Rhea" id="RHEA:20301"/>
        <dbReference type="Rhea" id="RHEA-COMP:9658"/>
        <dbReference type="Rhea" id="RHEA-COMP:9673"/>
        <dbReference type="ChEBI" id="CHEBI:30616"/>
        <dbReference type="ChEBI" id="CHEBI:32682"/>
        <dbReference type="ChEBI" id="CHEBI:33019"/>
        <dbReference type="ChEBI" id="CHEBI:78442"/>
        <dbReference type="ChEBI" id="CHEBI:78513"/>
        <dbReference type="ChEBI" id="CHEBI:456215"/>
        <dbReference type="EC" id="6.1.1.19"/>
    </reaction>
</comment>
<comment type="subunit">
    <text evidence="1">Monomer.</text>
</comment>
<comment type="subcellular location">
    <subcellularLocation>
        <location evidence="1">Cytoplasm</location>
    </subcellularLocation>
</comment>
<comment type="similarity">
    <text evidence="1">Belongs to the class-I aminoacyl-tRNA synthetase family.</text>
</comment>
<protein>
    <recommendedName>
        <fullName evidence="1">Arginine--tRNA ligase</fullName>
        <ecNumber evidence="1">6.1.1.19</ecNumber>
    </recommendedName>
    <alternativeName>
        <fullName evidence="1">Arginyl-tRNA synthetase</fullName>
        <shortName evidence="1">ArgRS</shortName>
    </alternativeName>
</protein>
<dbReference type="EC" id="6.1.1.19" evidence="1"/>
<dbReference type="EMBL" id="CP000444">
    <property type="protein sequence ID" value="ABI41459.1"/>
    <property type="molecule type" value="Genomic_DNA"/>
</dbReference>
<dbReference type="SMR" id="Q0HZJ6"/>
<dbReference type="KEGG" id="shm:Shewmr7_0456"/>
<dbReference type="HOGENOM" id="CLU_006406_5_1_6"/>
<dbReference type="GO" id="GO:0005737">
    <property type="term" value="C:cytoplasm"/>
    <property type="evidence" value="ECO:0007669"/>
    <property type="project" value="UniProtKB-SubCell"/>
</dbReference>
<dbReference type="GO" id="GO:0004814">
    <property type="term" value="F:arginine-tRNA ligase activity"/>
    <property type="evidence" value="ECO:0007669"/>
    <property type="project" value="UniProtKB-UniRule"/>
</dbReference>
<dbReference type="GO" id="GO:0005524">
    <property type="term" value="F:ATP binding"/>
    <property type="evidence" value="ECO:0007669"/>
    <property type="project" value="UniProtKB-UniRule"/>
</dbReference>
<dbReference type="GO" id="GO:0006420">
    <property type="term" value="P:arginyl-tRNA aminoacylation"/>
    <property type="evidence" value="ECO:0007669"/>
    <property type="project" value="UniProtKB-UniRule"/>
</dbReference>
<dbReference type="CDD" id="cd07956">
    <property type="entry name" value="Anticodon_Ia_Arg"/>
    <property type="match status" value="1"/>
</dbReference>
<dbReference type="CDD" id="cd00671">
    <property type="entry name" value="ArgRS_core"/>
    <property type="match status" value="1"/>
</dbReference>
<dbReference type="FunFam" id="1.10.730.10:FF:000001">
    <property type="entry name" value="Arginine--tRNA ligase"/>
    <property type="match status" value="1"/>
</dbReference>
<dbReference type="FunFam" id="3.30.1360.70:FF:000003">
    <property type="entry name" value="Arginine--tRNA ligase"/>
    <property type="match status" value="1"/>
</dbReference>
<dbReference type="FunFam" id="3.40.50.620:FF:000030">
    <property type="entry name" value="Arginine--tRNA ligase"/>
    <property type="match status" value="1"/>
</dbReference>
<dbReference type="Gene3D" id="3.30.1360.70">
    <property type="entry name" value="Arginyl tRNA synthetase N-terminal domain"/>
    <property type="match status" value="1"/>
</dbReference>
<dbReference type="Gene3D" id="3.40.50.620">
    <property type="entry name" value="HUPs"/>
    <property type="match status" value="1"/>
</dbReference>
<dbReference type="Gene3D" id="1.10.730.10">
    <property type="entry name" value="Isoleucyl-tRNA Synthetase, Domain 1"/>
    <property type="match status" value="1"/>
</dbReference>
<dbReference type="HAMAP" id="MF_00123">
    <property type="entry name" value="Arg_tRNA_synth"/>
    <property type="match status" value="1"/>
</dbReference>
<dbReference type="InterPro" id="IPR001412">
    <property type="entry name" value="aa-tRNA-synth_I_CS"/>
</dbReference>
<dbReference type="InterPro" id="IPR001278">
    <property type="entry name" value="Arg-tRNA-ligase"/>
</dbReference>
<dbReference type="InterPro" id="IPR005148">
    <property type="entry name" value="Arg-tRNA-synth_N"/>
</dbReference>
<dbReference type="InterPro" id="IPR036695">
    <property type="entry name" value="Arg-tRNA-synth_N_sf"/>
</dbReference>
<dbReference type="InterPro" id="IPR035684">
    <property type="entry name" value="ArgRS_core"/>
</dbReference>
<dbReference type="InterPro" id="IPR008909">
    <property type="entry name" value="DALR_anticod-bd"/>
</dbReference>
<dbReference type="InterPro" id="IPR014729">
    <property type="entry name" value="Rossmann-like_a/b/a_fold"/>
</dbReference>
<dbReference type="InterPro" id="IPR009080">
    <property type="entry name" value="tRNAsynth_Ia_anticodon-bd"/>
</dbReference>
<dbReference type="NCBIfam" id="TIGR00456">
    <property type="entry name" value="argS"/>
    <property type="match status" value="1"/>
</dbReference>
<dbReference type="PANTHER" id="PTHR11956:SF5">
    <property type="entry name" value="ARGININE--TRNA LIGASE, CYTOPLASMIC"/>
    <property type="match status" value="1"/>
</dbReference>
<dbReference type="PANTHER" id="PTHR11956">
    <property type="entry name" value="ARGINYL-TRNA SYNTHETASE"/>
    <property type="match status" value="1"/>
</dbReference>
<dbReference type="Pfam" id="PF03485">
    <property type="entry name" value="Arg_tRNA_synt_N"/>
    <property type="match status" value="1"/>
</dbReference>
<dbReference type="Pfam" id="PF05746">
    <property type="entry name" value="DALR_1"/>
    <property type="match status" value="1"/>
</dbReference>
<dbReference type="Pfam" id="PF00750">
    <property type="entry name" value="tRNA-synt_1d"/>
    <property type="match status" value="1"/>
</dbReference>
<dbReference type="PRINTS" id="PR01038">
    <property type="entry name" value="TRNASYNTHARG"/>
</dbReference>
<dbReference type="SMART" id="SM01016">
    <property type="entry name" value="Arg_tRNA_synt_N"/>
    <property type="match status" value="1"/>
</dbReference>
<dbReference type="SMART" id="SM00836">
    <property type="entry name" value="DALR_1"/>
    <property type="match status" value="1"/>
</dbReference>
<dbReference type="SUPFAM" id="SSF47323">
    <property type="entry name" value="Anticodon-binding domain of a subclass of class I aminoacyl-tRNA synthetases"/>
    <property type="match status" value="1"/>
</dbReference>
<dbReference type="SUPFAM" id="SSF55190">
    <property type="entry name" value="Arginyl-tRNA synthetase (ArgRS), N-terminal 'additional' domain"/>
    <property type="match status" value="1"/>
</dbReference>
<dbReference type="SUPFAM" id="SSF52374">
    <property type="entry name" value="Nucleotidylyl transferase"/>
    <property type="match status" value="1"/>
</dbReference>
<dbReference type="PROSITE" id="PS00178">
    <property type="entry name" value="AA_TRNA_LIGASE_I"/>
    <property type="match status" value="1"/>
</dbReference>
<evidence type="ECO:0000255" key="1">
    <source>
        <dbReference type="HAMAP-Rule" id="MF_00123"/>
    </source>
</evidence>